<reference key="1">
    <citation type="journal article" date="2009" name="Genome Res.">
        <title>Whole genome sequence of Desulfovibrio magneticus strain RS-1 revealed common gene clusters in magnetotactic bacteria.</title>
        <authorList>
            <person name="Nakazawa H."/>
            <person name="Arakaki A."/>
            <person name="Narita-Yamada S."/>
            <person name="Yashiro I."/>
            <person name="Jinno K."/>
            <person name="Aoki N."/>
            <person name="Tsuruyama A."/>
            <person name="Okamura Y."/>
            <person name="Tanikawa S."/>
            <person name="Fujita N."/>
            <person name="Takeyama H."/>
            <person name="Matsunaga T."/>
        </authorList>
    </citation>
    <scope>NUCLEOTIDE SEQUENCE [LARGE SCALE GENOMIC DNA]</scope>
    <source>
        <strain>ATCC 700980 / DSM 13731 / RS-1</strain>
    </source>
</reference>
<evidence type="ECO:0000255" key="1">
    <source>
        <dbReference type="HAMAP-Rule" id="MF_01334"/>
    </source>
</evidence>
<evidence type="ECO:0000305" key="2"/>
<dbReference type="EMBL" id="AP010904">
    <property type="protein sequence ID" value="BAH76435.1"/>
    <property type="molecule type" value="Genomic_DNA"/>
</dbReference>
<dbReference type="RefSeq" id="WP_015861597.1">
    <property type="nucleotide sequence ID" value="NC_012796.1"/>
</dbReference>
<dbReference type="SMR" id="C4XHR1"/>
<dbReference type="STRING" id="573370.DMR_29440"/>
<dbReference type="KEGG" id="dma:DMR_29440"/>
<dbReference type="eggNOG" id="COG1825">
    <property type="taxonomic scope" value="Bacteria"/>
</dbReference>
<dbReference type="HOGENOM" id="CLU_075939_0_1_7"/>
<dbReference type="OrthoDB" id="9786489at2"/>
<dbReference type="Proteomes" id="UP000009071">
    <property type="component" value="Chromosome"/>
</dbReference>
<dbReference type="GO" id="GO:0022625">
    <property type="term" value="C:cytosolic large ribosomal subunit"/>
    <property type="evidence" value="ECO:0007669"/>
    <property type="project" value="TreeGrafter"/>
</dbReference>
<dbReference type="GO" id="GO:0008097">
    <property type="term" value="F:5S rRNA binding"/>
    <property type="evidence" value="ECO:0007669"/>
    <property type="project" value="InterPro"/>
</dbReference>
<dbReference type="GO" id="GO:0003735">
    <property type="term" value="F:structural constituent of ribosome"/>
    <property type="evidence" value="ECO:0007669"/>
    <property type="project" value="InterPro"/>
</dbReference>
<dbReference type="GO" id="GO:0006412">
    <property type="term" value="P:translation"/>
    <property type="evidence" value="ECO:0007669"/>
    <property type="project" value="UniProtKB-UniRule"/>
</dbReference>
<dbReference type="CDD" id="cd00495">
    <property type="entry name" value="Ribosomal_L25_TL5_CTC"/>
    <property type="match status" value="1"/>
</dbReference>
<dbReference type="Gene3D" id="2.170.120.20">
    <property type="entry name" value="Ribosomal protein L25, beta domain"/>
    <property type="match status" value="1"/>
</dbReference>
<dbReference type="Gene3D" id="2.40.240.10">
    <property type="entry name" value="Ribosomal Protein L25, Chain P"/>
    <property type="match status" value="1"/>
</dbReference>
<dbReference type="HAMAP" id="MF_01334">
    <property type="entry name" value="Ribosomal_bL25_CTC"/>
    <property type="match status" value="1"/>
</dbReference>
<dbReference type="InterPro" id="IPR020056">
    <property type="entry name" value="Rbsml_bL25/Gln-tRNA_synth_N"/>
</dbReference>
<dbReference type="InterPro" id="IPR011035">
    <property type="entry name" value="Ribosomal_bL25/Gln-tRNA_synth"/>
</dbReference>
<dbReference type="InterPro" id="IPR020057">
    <property type="entry name" value="Ribosomal_bL25_b-dom"/>
</dbReference>
<dbReference type="InterPro" id="IPR037121">
    <property type="entry name" value="Ribosomal_bL25_C"/>
</dbReference>
<dbReference type="InterPro" id="IPR001021">
    <property type="entry name" value="Ribosomal_bL25_long"/>
</dbReference>
<dbReference type="InterPro" id="IPR029751">
    <property type="entry name" value="Ribosomal_L25_dom"/>
</dbReference>
<dbReference type="InterPro" id="IPR020930">
    <property type="entry name" value="Ribosomal_uL5_bac-type"/>
</dbReference>
<dbReference type="NCBIfam" id="TIGR00731">
    <property type="entry name" value="bL25_bact_ctc"/>
    <property type="match status" value="1"/>
</dbReference>
<dbReference type="NCBIfam" id="NF004135">
    <property type="entry name" value="PRK05618.3-1"/>
    <property type="match status" value="1"/>
</dbReference>
<dbReference type="PANTHER" id="PTHR33284">
    <property type="entry name" value="RIBOSOMAL PROTEIN L25/GLN-TRNA SYNTHETASE, ANTI-CODON-BINDING DOMAIN-CONTAINING PROTEIN"/>
    <property type="match status" value="1"/>
</dbReference>
<dbReference type="PANTHER" id="PTHR33284:SF1">
    <property type="entry name" value="RIBOSOMAL PROTEIN L25_GLN-TRNA SYNTHETASE, ANTI-CODON-BINDING DOMAIN-CONTAINING PROTEIN"/>
    <property type="match status" value="1"/>
</dbReference>
<dbReference type="Pfam" id="PF01386">
    <property type="entry name" value="Ribosomal_L25p"/>
    <property type="match status" value="1"/>
</dbReference>
<dbReference type="Pfam" id="PF14693">
    <property type="entry name" value="Ribosomal_TL5_C"/>
    <property type="match status" value="1"/>
</dbReference>
<dbReference type="SUPFAM" id="SSF50715">
    <property type="entry name" value="Ribosomal protein L25-like"/>
    <property type="match status" value="1"/>
</dbReference>
<sequence>MSQTQSLAVKTRAGLGKGACRKLRADDMVPGVYYDAKGVNVPVMVEHLPLQKLYSKIASSHVFDLQIEGETKPALVWKVEHHPTKPRITHVDFYGVDLTKEIQVRVPVEVVGKSKGQVKGGQLEIHREFIEVLCLPLVIPDKIVLDITNVDINESILIADVVLPEGVKAVYDNNYAVIGVLASAAEAAGEGA</sequence>
<proteinExistence type="inferred from homology"/>
<feature type="chain" id="PRO_1000214649" description="Large ribosomal subunit protein bL25">
    <location>
        <begin position="1"/>
        <end position="192"/>
    </location>
</feature>
<keyword id="KW-0687">Ribonucleoprotein</keyword>
<keyword id="KW-0689">Ribosomal protein</keyword>
<keyword id="KW-0694">RNA-binding</keyword>
<keyword id="KW-0699">rRNA-binding</keyword>
<organism>
    <name type="scientific">Solidesulfovibrio magneticus (strain ATCC 700980 / DSM 13731 / RS-1)</name>
    <name type="common">Desulfovibrio magneticus</name>
    <dbReference type="NCBI Taxonomy" id="573370"/>
    <lineage>
        <taxon>Bacteria</taxon>
        <taxon>Pseudomonadati</taxon>
        <taxon>Thermodesulfobacteriota</taxon>
        <taxon>Desulfovibrionia</taxon>
        <taxon>Desulfovibrionales</taxon>
        <taxon>Desulfovibrionaceae</taxon>
        <taxon>Solidesulfovibrio</taxon>
    </lineage>
</organism>
<accession>C4XHR1</accession>
<gene>
    <name evidence="1" type="primary">rplY</name>
    <name evidence="1" type="synonym">ctc</name>
    <name type="ordered locus">DMR_29440</name>
</gene>
<name>RL25_SOLM1</name>
<comment type="function">
    <text evidence="1">This is one of the proteins that binds to the 5S RNA in the ribosome where it forms part of the central protuberance.</text>
</comment>
<comment type="subunit">
    <text evidence="1">Part of the 50S ribosomal subunit; part of the 5S rRNA/L5/L18/L25 subcomplex. Contacts the 5S rRNA. Binds to the 5S rRNA independently of L5 and L18.</text>
</comment>
<comment type="similarity">
    <text evidence="1">Belongs to the bacterial ribosomal protein bL25 family. CTC subfamily.</text>
</comment>
<protein>
    <recommendedName>
        <fullName evidence="1">Large ribosomal subunit protein bL25</fullName>
    </recommendedName>
    <alternativeName>
        <fullName evidence="2">50S ribosomal protein L25</fullName>
    </alternativeName>
    <alternativeName>
        <fullName evidence="1">General stress protein CTC</fullName>
    </alternativeName>
</protein>